<feature type="chain" id="PRO_1000019672" description="Serine--tRNA ligase">
    <location>
        <begin position="1"/>
        <end position="426"/>
    </location>
</feature>
<feature type="region of interest" description="Disordered" evidence="2">
    <location>
        <begin position="103"/>
        <end position="129"/>
    </location>
</feature>
<feature type="compositionally biased region" description="Basic and acidic residues" evidence="2">
    <location>
        <begin position="114"/>
        <end position="125"/>
    </location>
</feature>
<feature type="binding site" evidence="1">
    <location>
        <begin position="230"/>
        <end position="232"/>
    </location>
    <ligand>
        <name>L-serine</name>
        <dbReference type="ChEBI" id="CHEBI:33384"/>
    </ligand>
</feature>
<feature type="binding site" evidence="1">
    <location>
        <begin position="261"/>
        <end position="263"/>
    </location>
    <ligand>
        <name>ATP</name>
        <dbReference type="ChEBI" id="CHEBI:30616"/>
    </ligand>
</feature>
<feature type="binding site" evidence="1">
    <location>
        <position position="284"/>
    </location>
    <ligand>
        <name>L-serine</name>
        <dbReference type="ChEBI" id="CHEBI:33384"/>
    </ligand>
</feature>
<feature type="binding site" evidence="1">
    <location>
        <begin position="348"/>
        <end position="351"/>
    </location>
    <ligand>
        <name>ATP</name>
        <dbReference type="ChEBI" id="CHEBI:30616"/>
    </ligand>
</feature>
<feature type="binding site" evidence="1">
    <location>
        <position position="384"/>
    </location>
    <ligand>
        <name>L-serine</name>
        <dbReference type="ChEBI" id="CHEBI:33384"/>
    </ligand>
</feature>
<evidence type="ECO:0000255" key="1">
    <source>
        <dbReference type="HAMAP-Rule" id="MF_00176"/>
    </source>
</evidence>
<evidence type="ECO:0000256" key="2">
    <source>
        <dbReference type="SAM" id="MobiDB-lite"/>
    </source>
</evidence>
<proteinExistence type="inferred from homology"/>
<sequence>MIDPKLLRNDLPMVVAALARRGFDFPEAEYQKLEDLRKASQVKSETLQAERNKLSQQIGKAKSKGEDCADLMAQAAQLESEQAAVEASFNETQKQLDTLLSSVPNLPDDSVPTGKDENDNPEIRRWGTPRTFDFTPKEHADLMQIGLDFTNGVKLAGARFTVLRGALSRLHRAIAQFMLDTHTEEHGYQEMSVPYLVNPQTIYGTGQLPKFEQDLFKTRLSDRDFYLIPTAEVSLTNLVAQEILEESVLPLQFVAHTPCFRSEAGSAGRDVRGMIRQHQFDKVELVHITTPEDSHAALERLTAHAERILQKLELPYRVILLCTGDMGFAARKTYDLEVWLPGQGKYREISSCSNCWDFQARRMQARFRAEGEKRPQLVHTLNGSGLAVGRTLVAILENYQQADGNILIPKALQPYMNGLDRITPSA</sequence>
<dbReference type="EC" id="6.1.1.11" evidence="1"/>
<dbReference type="EMBL" id="CP000513">
    <property type="protein sequence ID" value="ABQ13092.1"/>
    <property type="molecule type" value="Genomic_DNA"/>
</dbReference>
<dbReference type="RefSeq" id="WP_012031372.1">
    <property type="nucleotide sequence ID" value="NC_009446.1"/>
</dbReference>
<dbReference type="SMR" id="A5EXS3"/>
<dbReference type="STRING" id="246195.DNO_1065"/>
<dbReference type="KEGG" id="dno:DNO_1065"/>
<dbReference type="eggNOG" id="COG0172">
    <property type="taxonomic scope" value="Bacteria"/>
</dbReference>
<dbReference type="HOGENOM" id="CLU_023797_1_1_6"/>
<dbReference type="OrthoDB" id="9804647at2"/>
<dbReference type="UniPathway" id="UPA00906">
    <property type="reaction ID" value="UER00895"/>
</dbReference>
<dbReference type="Proteomes" id="UP000000248">
    <property type="component" value="Chromosome"/>
</dbReference>
<dbReference type="GO" id="GO:0005737">
    <property type="term" value="C:cytoplasm"/>
    <property type="evidence" value="ECO:0007669"/>
    <property type="project" value="UniProtKB-SubCell"/>
</dbReference>
<dbReference type="GO" id="GO:0005524">
    <property type="term" value="F:ATP binding"/>
    <property type="evidence" value="ECO:0007669"/>
    <property type="project" value="UniProtKB-UniRule"/>
</dbReference>
<dbReference type="GO" id="GO:0004828">
    <property type="term" value="F:serine-tRNA ligase activity"/>
    <property type="evidence" value="ECO:0007669"/>
    <property type="project" value="UniProtKB-UniRule"/>
</dbReference>
<dbReference type="GO" id="GO:0016260">
    <property type="term" value="P:selenocysteine biosynthetic process"/>
    <property type="evidence" value="ECO:0007669"/>
    <property type="project" value="UniProtKB-UniRule"/>
</dbReference>
<dbReference type="GO" id="GO:0006434">
    <property type="term" value="P:seryl-tRNA aminoacylation"/>
    <property type="evidence" value="ECO:0007669"/>
    <property type="project" value="UniProtKB-UniRule"/>
</dbReference>
<dbReference type="CDD" id="cd00770">
    <property type="entry name" value="SerRS_core"/>
    <property type="match status" value="1"/>
</dbReference>
<dbReference type="Gene3D" id="3.30.930.10">
    <property type="entry name" value="Bira Bifunctional Protein, Domain 2"/>
    <property type="match status" value="1"/>
</dbReference>
<dbReference type="Gene3D" id="1.10.287.40">
    <property type="entry name" value="Serine-tRNA synthetase, tRNA binding domain"/>
    <property type="match status" value="1"/>
</dbReference>
<dbReference type="HAMAP" id="MF_00176">
    <property type="entry name" value="Ser_tRNA_synth_type1"/>
    <property type="match status" value="1"/>
</dbReference>
<dbReference type="InterPro" id="IPR002314">
    <property type="entry name" value="aa-tRNA-synt_IIb"/>
</dbReference>
<dbReference type="InterPro" id="IPR006195">
    <property type="entry name" value="aa-tRNA-synth_II"/>
</dbReference>
<dbReference type="InterPro" id="IPR045864">
    <property type="entry name" value="aa-tRNA-synth_II/BPL/LPL"/>
</dbReference>
<dbReference type="InterPro" id="IPR002317">
    <property type="entry name" value="Ser-tRNA-ligase_type_1"/>
</dbReference>
<dbReference type="InterPro" id="IPR015866">
    <property type="entry name" value="Ser-tRNA-synth_1_N"/>
</dbReference>
<dbReference type="InterPro" id="IPR042103">
    <property type="entry name" value="SerRS_1_N_sf"/>
</dbReference>
<dbReference type="InterPro" id="IPR033729">
    <property type="entry name" value="SerRS_core"/>
</dbReference>
<dbReference type="InterPro" id="IPR010978">
    <property type="entry name" value="tRNA-bd_arm"/>
</dbReference>
<dbReference type="NCBIfam" id="TIGR00414">
    <property type="entry name" value="serS"/>
    <property type="match status" value="1"/>
</dbReference>
<dbReference type="PANTHER" id="PTHR43697:SF1">
    <property type="entry name" value="SERINE--TRNA LIGASE"/>
    <property type="match status" value="1"/>
</dbReference>
<dbReference type="PANTHER" id="PTHR43697">
    <property type="entry name" value="SERYL-TRNA SYNTHETASE"/>
    <property type="match status" value="1"/>
</dbReference>
<dbReference type="Pfam" id="PF02403">
    <property type="entry name" value="Seryl_tRNA_N"/>
    <property type="match status" value="1"/>
</dbReference>
<dbReference type="Pfam" id="PF00587">
    <property type="entry name" value="tRNA-synt_2b"/>
    <property type="match status" value="1"/>
</dbReference>
<dbReference type="PIRSF" id="PIRSF001529">
    <property type="entry name" value="Ser-tRNA-synth_IIa"/>
    <property type="match status" value="1"/>
</dbReference>
<dbReference type="PRINTS" id="PR00981">
    <property type="entry name" value="TRNASYNTHSER"/>
</dbReference>
<dbReference type="SUPFAM" id="SSF55681">
    <property type="entry name" value="Class II aaRS and biotin synthetases"/>
    <property type="match status" value="1"/>
</dbReference>
<dbReference type="SUPFAM" id="SSF46589">
    <property type="entry name" value="tRNA-binding arm"/>
    <property type="match status" value="1"/>
</dbReference>
<dbReference type="PROSITE" id="PS50862">
    <property type="entry name" value="AA_TRNA_LIGASE_II"/>
    <property type="match status" value="1"/>
</dbReference>
<keyword id="KW-0030">Aminoacyl-tRNA synthetase</keyword>
<keyword id="KW-0067">ATP-binding</keyword>
<keyword id="KW-0963">Cytoplasm</keyword>
<keyword id="KW-0436">Ligase</keyword>
<keyword id="KW-0547">Nucleotide-binding</keyword>
<keyword id="KW-0648">Protein biosynthesis</keyword>
<keyword id="KW-1185">Reference proteome</keyword>
<name>SYS_DICNV</name>
<comment type="function">
    <text evidence="1">Catalyzes the attachment of serine to tRNA(Ser). Is also able to aminoacylate tRNA(Sec) with serine, to form the misacylated tRNA L-seryl-tRNA(Sec), which will be further converted into selenocysteinyl-tRNA(Sec).</text>
</comment>
<comment type="catalytic activity">
    <reaction evidence="1">
        <text>tRNA(Ser) + L-serine + ATP = L-seryl-tRNA(Ser) + AMP + diphosphate + H(+)</text>
        <dbReference type="Rhea" id="RHEA:12292"/>
        <dbReference type="Rhea" id="RHEA-COMP:9669"/>
        <dbReference type="Rhea" id="RHEA-COMP:9703"/>
        <dbReference type="ChEBI" id="CHEBI:15378"/>
        <dbReference type="ChEBI" id="CHEBI:30616"/>
        <dbReference type="ChEBI" id="CHEBI:33019"/>
        <dbReference type="ChEBI" id="CHEBI:33384"/>
        <dbReference type="ChEBI" id="CHEBI:78442"/>
        <dbReference type="ChEBI" id="CHEBI:78533"/>
        <dbReference type="ChEBI" id="CHEBI:456215"/>
        <dbReference type="EC" id="6.1.1.11"/>
    </reaction>
</comment>
<comment type="catalytic activity">
    <reaction evidence="1">
        <text>tRNA(Sec) + L-serine + ATP = L-seryl-tRNA(Sec) + AMP + diphosphate + H(+)</text>
        <dbReference type="Rhea" id="RHEA:42580"/>
        <dbReference type="Rhea" id="RHEA-COMP:9742"/>
        <dbReference type="Rhea" id="RHEA-COMP:10128"/>
        <dbReference type="ChEBI" id="CHEBI:15378"/>
        <dbReference type="ChEBI" id="CHEBI:30616"/>
        <dbReference type="ChEBI" id="CHEBI:33019"/>
        <dbReference type="ChEBI" id="CHEBI:33384"/>
        <dbReference type="ChEBI" id="CHEBI:78442"/>
        <dbReference type="ChEBI" id="CHEBI:78533"/>
        <dbReference type="ChEBI" id="CHEBI:456215"/>
        <dbReference type="EC" id="6.1.1.11"/>
    </reaction>
</comment>
<comment type="pathway">
    <text evidence="1">Aminoacyl-tRNA biosynthesis; selenocysteinyl-tRNA(Sec) biosynthesis; L-seryl-tRNA(Sec) from L-serine and tRNA(Sec): step 1/1.</text>
</comment>
<comment type="subunit">
    <text evidence="1">Homodimer. The tRNA molecule binds across the dimer.</text>
</comment>
<comment type="subcellular location">
    <subcellularLocation>
        <location evidence="1">Cytoplasm</location>
    </subcellularLocation>
</comment>
<comment type="domain">
    <text evidence="1">Consists of two distinct domains, a catalytic core and a N-terminal extension that is involved in tRNA binding.</text>
</comment>
<comment type="similarity">
    <text evidence="1">Belongs to the class-II aminoacyl-tRNA synthetase family. Type-1 seryl-tRNA synthetase subfamily.</text>
</comment>
<reference key="1">
    <citation type="journal article" date="2007" name="Nat. Biotechnol.">
        <title>Genome sequence and identification of candidate vaccine antigens from the animal pathogen Dichelobacter nodosus.</title>
        <authorList>
            <person name="Myers G.S.A."/>
            <person name="Parker D."/>
            <person name="Al-Hasani K."/>
            <person name="Kennan R.M."/>
            <person name="Seemann T."/>
            <person name="Ren Q."/>
            <person name="Badger J.H."/>
            <person name="Selengut J.D."/>
            <person name="Deboy R.T."/>
            <person name="Tettelin H."/>
            <person name="Boyce J.D."/>
            <person name="McCarl V.P."/>
            <person name="Han X."/>
            <person name="Nelson W.C."/>
            <person name="Madupu R."/>
            <person name="Mohamoud Y."/>
            <person name="Holley T."/>
            <person name="Fedorova N."/>
            <person name="Khouri H."/>
            <person name="Bottomley S.P."/>
            <person name="Whittington R.J."/>
            <person name="Adler B."/>
            <person name="Songer J.G."/>
            <person name="Rood J.I."/>
            <person name="Paulsen I.T."/>
        </authorList>
    </citation>
    <scope>NUCLEOTIDE SEQUENCE [LARGE SCALE GENOMIC DNA]</scope>
    <source>
        <strain>VCS1703A</strain>
    </source>
</reference>
<organism>
    <name type="scientific">Dichelobacter nodosus (strain VCS1703A)</name>
    <dbReference type="NCBI Taxonomy" id="246195"/>
    <lineage>
        <taxon>Bacteria</taxon>
        <taxon>Pseudomonadati</taxon>
        <taxon>Pseudomonadota</taxon>
        <taxon>Gammaproteobacteria</taxon>
        <taxon>Cardiobacteriales</taxon>
        <taxon>Cardiobacteriaceae</taxon>
        <taxon>Dichelobacter</taxon>
    </lineage>
</organism>
<protein>
    <recommendedName>
        <fullName evidence="1">Serine--tRNA ligase</fullName>
        <ecNumber evidence="1">6.1.1.11</ecNumber>
    </recommendedName>
    <alternativeName>
        <fullName evidence="1">Seryl-tRNA synthetase</fullName>
        <shortName evidence="1">SerRS</shortName>
    </alternativeName>
    <alternativeName>
        <fullName evidence="1">Seryl-tRNA(Ser/Sec) synthetase</fullName>
    </alternativeName>
</protein>
<accession>A5EXS3</accession>
<gene>
    <name evidence="1" type="primary">serS</name>
    <name type="ordered locus">DNO_1065</name>
</gene>